<protein>
    <recommendedName>
        <fullName>GDP-fucose transporter 1</fullName>
    </recommendedName>
    <alternativeName>
        <fullName>Solute carrier family 35 member C1 homolog</fullName>
    </alternativeName>
</protein>
<keyword id="KW-0333">Golgi apparatus</keyword>
<keyword id="KW-0472">Membrane</keyword>
<keyword id="KW-1185">Reference proteome</keyword>
<keyword id="KW-0762">Sugar transport</keyword>
<keyword id="KW-0812">Transmembrane</keyword>
<keyword id="KW-1133">Transmembrane helix</keyword>
<keyword id="KW-0813">Transport</keyword>
<reference key="1">
    <citation type="journal article" date="2002" name="Nature">
        <title>Sequence and analysis of chromosome 2 of Dictyostelium discoideum.</title>
        <authorList>
            <person name="Gloeckner G."/>
            <person name="Eichinger L."/>
            <person name="Szafranski K."/>
            <person name="Pachebat J.A."/>
            <person name="Bankier A.T."/>
            <person name="Dear P.H."/>
            <person name="Lehmann R."/>
            <person name="Baumgart C."/>
            <person name="Parra G."/>
            <person name="Abril J.F."/>
            <person name="Guigo R."/>
            <person name="Kumpf K."/>
            <person name="Tunggal B."/>
            <person name="Cox E.C."/>
            <person name="Quail M.A."/>
            <person name="Platzer M."/>
            <person name="Rosenthal A."/>
            <person name="Noegel A.A."/>
        </authorList>
    </citation>
    <scope>NUCLEOTIDE SEQUENCE [LARGE SCALE GENOMIC DNA]</scope>
    <source>
        <strain>AX4</strain>
    </source>
</reference>
<reference key="2">
    <citation type="journal article" date="2005" name="Nature">
        <title>The genome of the social amoeba Dictyostelium discoideum.</title>
        <authorList>
            <person name="Eichinger L."/>
            <person name="Pachebat J.A."/>
            <person name="Gloeckner G."/>
            <person name="Rajandream M.A."/>
            <person name="Sucgang R."/>
            <person name="Berriman M."/>
            <person name="Song J."/>
            <person name="Olsen R."/>
            <person name="Szafranski K."/>
            <person name="Xu Q."/>
            <person name="Tunggal B."/>
            <person name="Kummerfeld S."/>
            <person name="Madera M."/>
            <person name="Konfortov B.A."/>
            <person name="Rivero F."/>
            <person name="Bankier A.T."/>
            <person name="Lehmann R."/>
            <person name="Hamlin N."/>
            <person name="Davies R."/>
            <person name="Gaudet P."/>
            <person name="Fey P."/>
            <person name="Pilcher K."/>
            <person name="Chen G."/>
            <person name="Saunders D."/>
            <person name="Sodergren E.J."/>
            <person name="Davis P."/>
            <person name="Kerhornou A."/>
            <person name="Nie X."/>
            <person name="Hall N."/>
            <person name="Anjard C."/>
            <person name="Hemphill L."/>
            <person name="Bason N."/>
            <person name="Farbrother P."/>
            <person name="Desany B."/>
            <person name="Just E."/>
            <person name="Morio T."/>
            <person name="Rost R."/>
            <person name="Churcher C.M."/>
            <person name="Cooper J."/>
            <person name="Haydock S."/>
            <person name="van Driessche N."/>
            <person name="Cronin A."/>
            <person name="Goodhead I."/>
            <person name="Muzny D.M."/>
            <person name="Mourier T."/>
            <person name="Pain A."/>
            <person name="Lu M."/>
            <person name="Harper D."/>
            <person name="Lindsay R."/>
            <person name="Hauser H."/>
            <person name="James K.D."/>
            <person name="Quiles M."/>
            <person name="Madan Babu M."/>
            <person name="Saito T."/>
            <person name="Buchrieser C."/>
            <person name="Wardroper A."/>
            <person name="Felder M."/>
            <person name="Thangavelu M."/>
            <person name="Johnson D."/>
            <person name="Knights A."/>
            <person name="Loulseged H."/>
            <person name="Mungall K.L."/>
            <person name="Oliver K."/>
            <person name="Price C."/>
            <person name="Quail M.A."/>
            <person name="Urushihara H."/>
            <person name="Hernandez J."/>
            <person name="Rabbinowitsch E."/>
            <person name="Steffen D."/>
            <person name="Sanders M."/>
            <person name="Ma J."/>
            <person name="Kohara Y."/>
            <person name="Sharp S."/>
            <person name="Simmonds M.N."/>
            <person name="Spiegler S."/>
            <person name="Tivey A."/>
            <person name="Sugano S."/>
            <person name="White B."/>
            <person name="Walker D."/>
            <person name="Woodward J.R."/>
            <person name="Winckler T."/>
            <person name="Tanaka Y."/>
            <person name="Shaulsky G."/>
            <person name="Schleicher M."/>
            <person name="Weinstock G.M."/>
            <person name="Rosenthal A."/>
            <person name="Cox E.C."/>
            <person name="Chisholm R.L."/>
            <person name="Gibbs R.A."/>
            <person name="Loomis W.F."/>
            <person name="Platzer M."/>
            <person name="Kay R.R."/>
            <person name="Williams J.G."/>
            <person name="Dear P.H."/>
            <person name="Noegel A.A."/>
            <person name="Barrell B.G."/>
            <person name="Kuspa A."/>
        </authorList>
    </citation>
    <scope>NUCLEOTIDE SEQUENCE [LARGE SCALE GENOMIC DNA]</scope>
    <source>
        <strain>AX4</strain>
    </source>
</reference>
<dbReference type="EMBL" id="AAFI02000019">
    <property type="protein sequence ID" value="EAL69005.1"/>
    <property type="molecule type" value="Genomic_DNA"/>
</dbReference>
<dbReference type="RefSeq" id="XP_642816.1">
    <property type="nucleotide sequence ID" value="XM_637724.1"/>
</dbReference>
<dbReference type="SMR" id="Q550W6"/>
<dbReference type="FunCoup" id="Q550W6">
    <property type="interactions" value="182"/>
</dbReference>
<dbReference type="STRING" id="44689.Q550W6"/>
<dbReference type="PaxDb" id="44689-DDB0217856"/>
<dbReference type="EnsemblProtists" id="EAL69005">
    <property type="protein sequence ID" value="EAL69005"/>
    <property type="gene ID" value="DDB_G0277007"/>
</dbReference>
<dbReference type="GeneID" id="8620679"/>
<dbReference type="KEGG" id="ddi:DDB_G0277007"/>
<dbReference type="dictyBase" id="DDB_G0277007"/>
<dbReference type="VEuPathDB" id="AmoebaDB:DDB_G0277007"/>
<dbReference type="eggNOG" id="KOG1442">
    <property type="taxonomic scope" value="Eukaryota"/>
</dbReference>
<dbReference type="HOGENOM" id="CLU_044894_1_0_1"/>
<dbReference type="InParanoid" id="Q550W6"/>
<dbReference type="OMA" id="WWTSNIV"/>
<dbReference type="PhylomeDB" id="Q550W6"/>
<dbReference type="Reactome" id="R-DDI-6787639">
    <property type="pathway name" value="GDP-fucose biosynthesis"/>
</dbReference>
<dbReference type="Reactome" id="R-DDI-727802">
    <property type="pathway name" value="Transport of nucleotide sugars"/>
</dbReference>
<dbReference type="PRO" id="PR:Q550W6"/>
<dbReference type="Proteomes" id="UP000002195">
    <property type="component" value="Chromosome 2"/>
</dbReference>
<dbReference type="GO" id="GO:0005794">
    <property type="term" value="C:Golgi apparatus"/>
    <property type="evidence" value="ECO:0000318"/>
    <property type="project" value="GO_Central"/>
</dbReference>
<dbReference type="GO" id="GO:0000139">
    <property type="term" value="C:Golgi membrane"/>
    <property type="evidence" value="ECO:0000250"/>
    <property type="project" value="UniProtKB"/>
</dbReference>
<dbReference type="GO" id="GO:0015297">
    <property type="term" value="F:antiporter activity"/>
    <property type="evidence" value="ECO:0000318"/>
    <property type="project" value="GO_Central"/>
</dbReference>
<dbReference type="GO" id="GO:0005457">
    <property type="term" value="F:GDP-fucose transmembrane transporter activity"/>
    <property type="evidence" value="ECO:0000250"/>
    <property type="project" value="UniProtKB"/>
</dbReference>
<dbReference type="GO" id="GO:0036085">
    <property type="term" value="P:GDP-fucose import into Golgi lumen"/>
    <property type="evidence" value="ECO:0000250"/>
    <property type="project" value="UniProtKB"/>
</dbReference>
<dbReference type="InterPro" id="IPR004853">
    <property type="entry name" value="Sugar_P_trans_dom"/>
</dbReference>
<dbReference type="InterPro" id="IPR050186">
    <property type="entry name" value="TPT_transporter"/>
</dbReference>
<dbReference type="PANTHER" id="PTHR11132">
    <property type="entry name" value="SOLUTE CARRIER FAMILY 35"/>
    <property type="match status" value="1"/>
</dbReference>
<dbReference type="Pfam" id="PF03151">
    <property type="entry name" value="TPT"/>
    <property type="match status" value="1"/>
</dbReference>
<sequence length="368" mass="41466">MNIQNDKERLLNGSIDEIEIITTDNNENDTIRNDDILKNSQLREQQQHQQIQQQIQQQKKESSLSTIASVIAFYFFISISLVFLNKILLSDFKFEYPLFITWYQQIISFVSIYIMTSISKSVPALSFLPEFEFKSATASKVLPVTAVLTGMVIFNNLCLEYVEVSFYQVARSLTICFSLILTYIVLKSKTSYRATMACLVVFLGFVLGSAGEVNFSWLGIIFGLLSSFFVALYSIAVKRVLPAVDGNEWRLSIYNTAISIGLIFPLILVSGEANTILDEPLLYSGTFWFYMTVAGLMGYLISISVFMQIKHTSPLTNTISGTVKACVQTILAVVFWGNPISTQNAVGILLVIGGSFWYSMQRFFEMKK</sequence>
<proteinExistence type="inferred from homology"/>
<accession>Q550W6</accession>
<accession>Q86KQ3</accession>
<feature type="chain" id="PRO_0000343210" description="GDP-fucose transporter 1">
    <location>
        <begin position="1"/>
        <end position="368"/>
    </location>
</feature>
<feature type="transmembrane region" description="Helical" evidence="2">
    <location>
        <begin position="64"/>
        <end position="84"/>
    </location>
</feature>
<feature type="transmembrane region" description="Helical" evidence="2">
    <location>
        <begin position="98"/>
        <end position="118"/>
    </location>
</feature>
<feature type="transmembrane region" description="Helical" evidence="2">
    <location>
        <begin position="141"/>
        <end position="161"/>
    </location>
</feature>
<feature type="transmembrane region" description="Helical" evidence="2">
    <location>
        <begin position="166"/>
        <end position="186"/>
    </location>
</feature>
<feature type="transmembrane region" description="Helical" evidence="2">
    <location>
        <begin position="195"/>
        <end position="215"/>
    </location>
</feature>
<feature type="transmembrane region" description="Helical" evidence="2">
    <location>
        <begin position="217"/>
        <end position="237"/>
    </location>
</feature>
<feature type="transmembrane region" description="Helical" evidence="2">
    <location>
        <begin position="251"/>
        <end position="271"/>
    </location>
</feature>
<feature type="transmembrane region" description="Helical" evidence="2">
    <location>
        <begin position="287"/>
        <end position="307"/>
    </location>
</feature>
<feature type="transmembrane region" description="Helical" evidence="2">
    <location>
        <begin position="332"/>
        <end position="352"/>
    </location>
</feature>
<organism>
    <name type="scientific">Dictyostelium discoideum</name>
    <name type="common">Social amoeba</name>
    <dbReference type="NCBI Taxonomy" id="44689"/>
    <lineage>
        <taxon>Eukaryota</taxon>
        <taxon>Amoebozoa</taxon>
        <taxon>Evosea</taxon>
        <taxon>Eumycetozoa</taxon>
        <taxon>Dictyostelia</taxon>
        <taxon>Dictyosteliales</taxon>
        <taxon>Dictyosteliaceae</taxon>
        <taxon>Dictyostelium</taxon>
    </lineage>
</organism>
<evidence type="ECO:0000250" key="1">
    <source>
        <dbReference type="UniProtKB" id="Q96A29"/>
    </source>
</evidence>
<evidence type="ECO:0000255" key="2"/>
<evidence type="ECO:0000305" key="3"/>
<name>FUCT1_DICDI</name>
<gene>
    <name type="primary">slc35c1</name>
    <name type="synonym">fuct1</name>
    <name type="ORF">DDB_G0277007</name>
</gene>
<comment type="function">
    <text evidence="1">Antiporter specific for GDP-l-fucose and depending on the concomitant reverse transport of GMP. Involved in GDP-fucose import from the cytoplasm into the Golgi lumen.</text>
</comment>
<comment type="catalytic activity">
    <reaction evidence="1">
        <text>GMP(out) + GDP-beta-L-fucose(in) = GMP(in) + GDP-beta-L-fucose(out)</text>
        <dbReference type="Rhea" id="RHEA:72707"/>
        <dbReference type="ChEBI" id="CHEBI:57273"/>
        <dbReference type="ChEBI" id="CHEBI:58115"/>
    </reaction>
</comment>
<comment type="subcellular location">
    <subcellularLocation>
        <location evidence="1">Golgi apparatus membrane</location>
        <topology evidence="2">Multi-pass membrane protein</topology>
    </subcellularLocation>
</comment>
<comment type="similarity">
    <text evidence="3">Belongs to the TPT transporter family. SLC35C subfamily.</text>
</comment>